<reference key="1">
    <citation type="journal article" date="2008" name="J. Bacteriol.">
        <title>The complete genome sequence of Escherichia coli DH10B: insights into the biology of a laboratory workhorse.</title>
        <authorList>
            <person name="Durfee T."/>
            <person name="Nelson R."/>
            <person name="Baldwin S."/>
            <person name="Plunkett G. III"/>
            <person name="Burland V."/>
            <person name="Mau B."/>
            <person name="Petrosino J.F."/>
            <person name="Qin X."/>
            <person name="Muzny D.M."/>
            <person name="Ayele M."/>
            <person name="Gibbs R.A."/>
            <person name="Csorgo B."/>
            <person name="Posfai G."/>
            <person name="Weinstock G.M."/>
            <person name="Blattner F.R."/>
        </authorList>
    </citation>
    <scope>NUCLEOTIDE SEQUENCE [LARGE SCALE GENOMIC DNA]</scope>
    <source>
        <strain>K12 / DH10B</strain>
    </source>
</reference>
<protein>
    <recommendedName>
        <fullName evidence="1">Dual-specificity RNA methyltransferase RlmN</fullName>
        <ecNumber evidence="1">2.1.1.192</ecNumber>
    </recommendedName>
    <alternativeName>
        <fullName evidence="1">23S rRNA (adenine(2503)-C(2))-methyltransferase</fullName>
    </alternativeName>
    <alternativeName>
        <fullName evidence="1">23S rRNA m2A2503 methyltransferase</fullName>
    </alternativeName>
    <alternativeName>
        <fullName evidence="1">Ribosomal RNA large subunit methyltransferase N</fullName>
    </alternativeName>
    <alternativeName>
        <fullName evidence="1">tRNA (adenine(37)-C(2))-methyltransferase</fullName>
    </alternativeName>
    <alternativeName>
        <fullName evidence="1">tRNA m2A37 methyltransferase</fullName>
    </alternativeName>
</protein>
<proteinExistence type="inferred from homology"/>
<gene>
    <name evidence="1" type="primary">rlmN</name>
    <name type="ordered locus">ECDH10B_2683</name>
</gene>
<evidence type="ECO:0000255" key="1">
    <source>
        <dbReference type="HAMAP-Rule" id="MF_01849"/>
    </source>
</evidence>
<evidence type="ECO:0000255" key="2">
    <source>
        <dbReference type="PROSITE-ProRule" id="PRU01266"/>
    </source>
</evidence>
<organism>
    <name type="scientific">Escherichia coli (strain K12 / DH10B)</name>
    <dbReference type="NCBI Taxonomy" id="316385"/>
    <lineage>
        <taxon>Bacteria</taxon>
        <taxon>Pseudomonadati</taxon>
        <taxon>Pseudomonadota</taxon>
        <taxon>Gammaproteobacteria</taxon>
        <taxon>Enterobacterales</taxon>
        <taxon>Enterobacteriaceae</taxon>
        <taxon>Escherichia</taxon>
    </lineage>
</organism>
<feature type="chain" id="PRO_0000350165" description="Dual-specificity RNA methyltransferase RlmN">
    <location>
        <begin position="1"/>
        <end position="384"/>
    </location>
</feature>
<feature type="domain" description="Radical SAM core" evidence="2">
    <location>
        <begin position="111"/>
        <end position="350"/>
    </location>
</feature>
<feature type="active site" description="Proton acceptor" evidence="1">
    <location>
        <position position="105"/>
    </location>
</feature>
<feature type="active site" description="S-methylcysteine intermediate" evidence="1">
    <location>
        <position position="355"/>
    </location>
</feature>
<feature type="binding site" evidence="1">
    <location>
        <position position="125"/>
    </location>
    <ligand>
        <name>[4Fe-4S] cluster</name>
        <dbReference type="ChEBI" id="CHEBI:49883"/>
        <note>4Fe-4S-S-AdoMet</note>
    </ligand>
</feature>
<feature type="binding site" evidence="1">
    <location>
        <position position="129"/>
    </location>
    <ligand>
        <name>[4Fe-4S] cluster</name>
        <dbReference type="ChEBI" id="CHEBI:49883"/>
        <note>4Fe-4S-S-AdoMet</note>
    </ligand>
</feature>
<feature type="binding site" evidence="1">
    <location>
        <position position="132"/>
    </location>
    <ligand>
        <name>[4Fe-4S] cluster</name>
        <dbReference type="ChEBI" id="CHEBI:49883"/>
        <note>4Fe-4S-S-AdoMet</note>
    </ligand>
</feature>
<feature type="binding site" evidence="1">
    <location>
        <begin position="179"/>
        <end position="180"/>
    </location>
    <ligand>
        <name>S-adenosyl-L-methionine</name>
        <dbReference type="ChEBI" id="CHEBI:59789"/>
    </ligand>
</feature>
<feature type="binding site" evidence="1">
    <location>
        <position position="211"/>
    </location>
    <ligand>
        <name>S-adenosyl-L-methionine</name>
        <dbReference type="ChEBI" id="CHEBI:59789"/>
    </ligand>
</feature>
<feature type="binding site" evidence="1">
    <location>
        <begin position="233"/>
        <end position="235"/>
    </location>
    <ligand>
        <name>S-adenosyl-L-methionine</name>
        <dbReference type="ChEBI" id="CHEBI:59789"/>
    </ligand>
</feature>
<feature type="binding site" evidence="1">
    <location>
        <position position="312"/>
    </location>
    <ligand>
        <name>S-adenosyl-L-methionine</name>
        <dbReference type="ChEBI" id="CHEBI:59789"/>
    </ligand>
</feature>
<feature type="disulfide bond" description="(transient)" evidence="1">
    <location>
        <begin position="118"/>
        <end position="355"/>
    </location>
</feature>
<dbReference type="EC" id="2.1.1.192" evidence="1"/>
<dbReference type="EMBL" id="CP000948">
    <property type="protein sequence ID" value="ACB03669.1"/>
    <property type="molecule type" value="Genomic_DNA"/>
</dbReference>
<dbReference type="RefSeq" id="WP_000003317.1">
    <property type="nucleotide sequence ID" value="NC_010473.1"/>
</dbReference>
<dbReference type="SMR" id="B1XAZ2"/>
<dbReference type="KEGG" id="ecd:ECDH10B_2683"/>
<dbReference type="HOGENOM" id="CLU_029101_0_0_6"/>
<dbReference type="GO" id="GO:0005737">
    <property type="term" value="C:cytoplasm"/>
    <property type="evidence" value="ECO:0007669"/>
    <property type="project" value="UniProtKB-SubCell"/>
</dbReference>
<dbReference type="GO" id="GO:0051539">
    <property type="term" value="F:4 iron, 4 sulfur cluster binding"/>
    <property type="evidence" value="ECO:0007669"/>
    <property type="project" value="UniProtKB-UniRule"/>
</dbReference>
<dbReference type="GO" id="GO:0046872">
    <property type="term" value="F:metal ion binding"/>
    <property type="evidence" value="ECO:0007669"/>
    <property type="project" value="UniProtKB-KW"/>
</dbReference>
<dbReference type="GO" id="GO:0070040">
    <property type="term" value="F:rRNA (adenine(2503)-C2-)-methyltransferase activity"/>
    <property type="evidence" value="ECO:0007669"/>
    <property type="project" value="UniProtKB-UniRule"/>
</dbReference>
<dbReference type="GO" id="GO:0019843">
    <property type="term" value="F:rRNA binding"/>
    <property type="evidence" value="ECO:0007669"/>
    <property type="project" value="UniProtKB-UniRule"/>
</dbReference>
<dbReference type="GO" id="GO:0002935">
    <property type="term" value="F:tRNA (adenine(37)-C2)-methyltransferase activity"/>
    <property type="evidence" value="ECO:0007669"/>
    <property type="project" value="UniProtKB-UniRule"/>
</dbReference>
<dbReference type="GO" id="GO:0000049">
    <property type="term" value="F:tRNA binding"/>
    <property type="evidence" value="ECO:0007669"/>
    <property type="project" value="UniProtKB-UniRule"/>
</dbReference>
<dbReference type="GO" id="GO:0070475">
    <property type="term" value="P:rRNA base methylation"/>
    <property type="evidence" value="ECO:0007669"/>
    <property type="project" value="UniProtKB-UniRule"/>
</dbReference>
<dbReference type="GO" id="GO:0030488">
    <property type="term" value="P:tRNA methylation"/>
    <property type="evidence" value="ECO:0007669"/>
    <property type="project" value="UniProtKB-UniRule"/>
</dbReference>
<dbReference type="CDD" id="cd01335">
    <property type="entry name" value="Radical_SAM"/>
    <property type="match status" value="1"/>
</dbReference>
<dbReference type="FunFam" id="1.10.150.530:FF:000001">
    <property type="entry name" value="Dual-specificity RNA methyltransferase RlmN"/>
    <property type="match status" value="1"/>
</dbReference>
<dbReference type="FunFam" id="3.20.20.70:FF:000008">
    <property type="entry name" value="Dual-specificity RNA methyltransferase RlmN"/>
    <property type="match status" value="1"/>
</dbReference>
<dbReference type="Gene3D" id="1.10.150.530">
    <property type="match status" value="1"/>
</dbReference>
<dbReference type="Gene3D" id="3.20.20.70">
    <property type="entry name" value="Aldolase class I"/>
    <property type="match status" value="1"/>
</dbReference>
<dbReference type="HAMAP" id="MF_01849">
    <property type="entry name" value="RNA_methyltr_RlmN"/>
    <property type="match status" value="1"/>
</dbReference>
<dbReference type="InterPro" id="IPR013785">
    <property type="entry name" value="Aldolase_TIM"/>
</dbReference>
<dbReference type="InterPro" id="IPR040072">
    <property type="entry name" value="Methyltransferase_A"/>
</dbReference>
<dbReference type="InterPro" id="IPR048641">
    <property type="entry name" value="RlmN_N"/>
</dbReference>
<dbReference type="InterPro" id="IPR027492">
    <property type="entry name" value="RNA_MTrfase_RlmN"/>
</dbReference>
<dbReference type="InterPro" id="IPR004383">
    <property type="entry name" value="rRNA_lsu_MTrfase_RlmN/Cfr"/>
</dbReference>
<dbReference type="InterPro" id="IPR007197">
    <property type="entry name" value="rSAM"/>
</dbReference>
<dbReference type="NCBIfam" id="NF008396">
    <property type="entry name" value="PRK11194.1"/>
    <property type="match status" value="1"/>
</dbReference>
<dbReference type="NCBIfam" id="TIGR00048">
    <property type="entry name" value="rRNA_mod_RlmN"/>
    <property type="match status" value="1"/>
</dbReference>
<dbReference type="PANTHER" id="PTHR30544">
    <property type="entry name" value="23S RRNA METHYLTRANSFERASE"/>
    <property type="match status" value="1"/>
</dbReference>
<dbReference type="PANTHER" id="PTHR30544:SF5">
    <property type="entry name" value="RADICAL SAM CORE DOMAIN-CONTAINING PROTEIN"/>
    <property type="match status" value="1"/>
</dbReference>
<dbReference type="Pfam" id="PF04055">
    <property type="entry name" value="Radical_SAM"/>
    <property type="match status" value="1"/>
</dbReference>
<dbReference type="Pfam" id="PF21016">
    <property type="entry name" value="RlmN_N"/>
    <property type="match status" value="1"/>
</dbReference>
<dbReference type="PIRSF" id="PIRSF006004">
    <property type="entry name" value="CHP00048"/>
    <property type="match status" value="1"/>
</dbReference>
<dbReference type="SFLD" id="SFLDF00275">
    <property type="entry name" value="adenosine_C2_methyltransferase"/>
    <property type="match status" value="1"/>
</dbReference>
<dbReference type="SFLD" id="SFLDG01062">
    <property type="entry name" value="methyltransferase_(Class_A)"/>
    <property type="match status" value="1"/>
</dbReference>
<dbReference type="SUPFAM" id="SSF102114">
    <property type="entry name" value="Radical SAM enzymes"/>
    <property type="match status" value="1"/>
</dbReference>
<dbReference type="PROSITE" id="PS51918">
    <property type="entry name" value="RADICAL_SAM"/>
    <property type="match status" value="1"/>
</dbReference>
<sequence>MSEQLVTPENVTTKDGKINLLDLNRQQMREFFKDLGEKPFRADQVMKWMYHYCCDNFDEMTDINKVLRGKLKEVAEIRAPEVVEEQRSSDGTIKWAIAVGDQRVETVYIPEDDRATLCVSSQVGCALECKFCSTAQQGFNRNLRVSEIIGQVWRAAKIVGAAKVTGQRPITNVVMMGMGEPLLNLNNVVPAMEIMLDDFGFGLSKRRVTLSTSGVVPALDKLGDMIDVALAISLHAPNDEIRDEIVPINKKYNIETFLAAVRRYLEKSNANQGRVTIEYVMLDHVNDGTEHAHQLAELLKDTPCKINLIPWNPFPGAPYGRSSNSRIDRFSKVLMSYGFTTIVRKTRGDDIDAACGQLAGDVIDRTKRTLRKRMQGEAIDIKAV</sequence>
<name>RLMN_ECODH</name>
<accession>B1XAZ2</accession>
<comment type="function">
    <text evidence="1">Specifically methylates position 2 of adenine 2503 in 23S rRNA and position 2 of adenine 37 in tRNAs. m2A2503 modification seems to play a crucial role in the proofreading step occurring at the peptidyl transferase center and thus would serve to optimize ribosomal fidelity.</text>
</comment>
<comment type="catalytic activity">
    <reaction evidence="1">
        <text>adenosine(2503) in 23S rRNA + 2 reduced [2Fe-2S]-[ferredoxin] + 2 S-adenosyl-L-methionine = 2-methyladenosine(2503) in 23S rRNA + 5'-deoxyadenosine + L-methionine + 2 oxidized [2Fe-2S]-[ferredoxin] + S-adenosyl-L-homocysteine</text>
        <dbReference type="Rhea" id="RHEA:42916"/>
        <dbReference type="Rhea" id="RHEA-COMP:10000"/>
        <dbReference type="Rhea" id="RHEA-COMP:10001"/>
        <dbReference type="Rhea" id="RHEA-COMP:10152"/>
        <dbReference type="Rhea" id="RHEA-COMP:10282"/>
        <dbReference type="ChEBI" id="CHEBI:17319"/>
        <dbReference type="ChEBI" id="CHEBI:33737"/>
        <dbReference type="ChEBI" id="CHEBI:33738"/>
        <dbReference type="ChEBI" id="CHEBI:57844"/>
        <dbReference type="ChEBI" id="CHEBI:57856"/>
        <dbReference type="ChEBI" id="CHEBI:59789"/>
        <dbReference type="ChEBI" id="CHEBI:74411"/>
        <dbReference type="ChEBI" id="CHEBI:74497"/>
        <dbReference type="EC" id="2.1.1.192"/>
    </reaction>
</comment>
<comment type="catalytic activity">
    <reaction evidence="1">
        <text>adenosine(37) in tRNA + 2 reduced [2Fe-2S]-[ferredoxin] + 2 S-adenosyl-L-methionine = 2-methyladenosine(37) in tRNA + 5'-deoxyadenosine + L-methionine + 2 oxidized [2Fe-2S]-[ferredoxin] + S-adenosyl-L-homocysteine</text>
        <dbReference type="Rhea" id="RHEA:43332"/>
        <dbReference type="Rhea" id="RHEA-COMP:10000"/>
        <dbReference type="Rhea" id="RHEA-COMP:10001"/>
        <dbReference type="Rhea" id="RHEA-COMP:10162"/>
        <dbReference type="Rhea" id="RHEA-COMP:10485"/>
        <dbReference type="ChEBI" id="CHEBI:17319"/>
        <dbReference type="ChEBI" id="CHEBI:33737"/>
        <dbReference type="ChEBI" id="CHEBI:33738"/>
        <dbReference type="ChEBI" id="CHEBI:57844"/>
        <dbReference type="ChEBI" id="CHEBI:57856"/>
        <dbReference type="ChEBI" id="CHEBI:59789"/>
        <dbReference type="ChEBI" id="CHEBI:74411"/>
        <dbReference type="ChEBI" id="CHEBI:74497"/>
        <dbReference type="EC" id="2.1.1.192"/>
    </reaction>
</comment>
<comment type="cofactor">
    <cofactor evidence="1">
        <name>[4Fe-4S] cluster</name>
        <dbReference type="ChEBI" id="CHEBI:49883"/>
    </cofactor>
    <text evidence="1">Binds 1 [4Fe-4S] cluster. The cluster is coordinated with 3 cysteines and an exchangeable S-adenosyl-L-methionine.</text>
</comment>
<comment type="subcellular location">
    <subcellularLocation>
        <location evidence="1">Cytoplasm</location>
    </subcellularLocation>
</comment>
<comment type="miscellaneous">
    <text evidence="1">Reaction proceeds by a ping-pong mechanism involving intermediate methylation of a conserved cysteine residue.</text>
</comment>
<comment type="similarity">
    <text evidence="1">Belongs to the radical SAM superfamily. RlmN family.</text>
</comment>
<keyword id="KW-0004">4Fe-4S</keyword>
<keyword id="KW-0963">Cytoplasm</keyword>
<keyword id="KW-1015">Disulfide bond</keyword>
<keyword id="KW-0408">Iron</keyword>
<keyword id="KW-0411">Iron-sulfur</keyword>
<keyword id="KW-0479">Metal-binding</keyword>
<keyword id="KW-0489">Methyltransferase</keyword>
<keyword id="KW-0698">rRNA processing</keyword>
<keyword id="KW-0949">S-adenosyl-L-methionine</keyword>
<keyword id="KW-0808">Transferase</keyword>
<keyword id="KW-0819">tRNA processing</keyword>